<protein>
    <recommendedName>
        <fullName evidence="1">UPF0370 protein YpfN</fullName>
    </recommendedName>
</protein>
<comment type="subcellular location">
    <subcellularLocation>
        <location evidence="1">Cell membrane</location>
        <topology evidence="1">Single-pass membrane protein</topology>
    </subcellularLocation>
</comment>
<comment type="similarity">
    <text evidence="1">Belongs to the UPF0370 family.</text>
</comment>
<feature type="chain" id="PRO_1000185455" description="UPF0370 protein YpfN">
    <location>
        <begin position="1"/>
        <end position="66"/>
    </location>
</feature>
<feature type="transmembrane region" description="Helical" evidence="1">
    <location>
        <begin position="4"/>
        <end position="24"/>
    </location>
</feature>
<feature type="region of interest" description="Disordered" evidence="2">
    <location>
        <begin position="39"/>
        <end position="66"/>
    </location>
</feature>
<feature type="compositionally biased region" description="Basic and acidic residues" evidence="2">
    <location>
        <begin position="42"/>
        <end position="51"/>
    </location>
</feature>
<dbReference type="EMBL" id="FM180568">
    <property type="protein sequence ID" value="CAS10257.1"/>
    <property type="molecule type" value="Genomic_DNA"/>
</dbReference>
<dbReference type="RefSeq" id="WP_000383836.1">
    <property type="nucleotide sequence ID" value="NC_011601.1"/>
</dbReference>
<dbReference type="SMR" id="B7UGM2"/>
<dbReference type="KEGG" id="ecg:E2348C_2709"/>
<dbReference type="HOGENOM" id="CLU_198936_0_0_6"/>
<dbReference type="Proteomes" id="UP000008205">
    <property type="component" value="Chromosome"/>
</dbReference>
<dbReference type="GO" id="GO:0005886">
    <property type="term" value="C:plasma membrane"/>
    <property type="evidence" value="ECO:0007669"/>
    <property type="project" value="UniProtKB-SubCell"/>
</dbReference>
<dbReference type="HAMAP" id="MF_01566">
    <property type="entry name" value="UPF0370"/>
    <property type="match status" value="1"/>
</dbReference>
<dbReference type="InterPro" id="IPR020910">
    <property type="entry name" value="UPF0370"/>
</dbReference>
<dbReference type="NCBIfam" id="NF010185">
    <property type="entry name" value="PRK13664.1"/>
    <property type="match status" value="1"/>
</dbReference>
<dbReference type="Pfam" id="PF13980">
    <property type="entry name" value="UPF0370"/>
    <property type="match status" value="1"/>
</dbReference>
<organism>
    <name type="scientific">Escherichia coli O127:H6 (strain E2348/69 / EPEC)</name>
    <dbReference type="NCBI Taxonomy" id="574521"/>
    <lineage>
        <taxon>Bacteria</taxon>
        <taxon>Pseudomonadati</taxon>
        <taxon>Pseudomonadota</taxon>
        <taxon>Gammaproteobacteria</taxon>
        <taxon>Enterobacterales</taxon>
        <taxon>Enterobacteriaceae</taxon>
        <taxon>Escherichia</taxon>
    </lineage>
</organism>
<reference key="1">
    <citation type="journal article" date="2009" name="J. Bacteriol.">
        <title>Complete genome sequence and comparative genome analysis of enteropathogenic Escherichia coli O127:H6 strain E2348/69.</title>
        <authorList>
            <person name="Iguchi A."/>
            <person name="Thomson N.R."/>
            <person name="Ogura Y."/>
            <person name="Saunders D."/>
            <person name="Ooka T."/>
            <person name="Henderson I.R."/>
            <person name="Harris D."/>
            <person name="Asadulghani M."/>
            <person name="Kurokawa K."/>
            <person name="Dean P."/>
            <person name="Kenny B."/>
            <person name="Quail M.A."/>
            <person name="Thurston S."/>
            <person name="Dougan G."/>
            <person name="Hayashi T."/>
            <person name="Parkhill J."/>
            <person name="Frankel G."/>
        </authorList>
    </citation>
    <scope>NUCLEOTIDE SEQUENCE [LARGE SCALE GENOMIC DNA]</scope>
    <source>
        <strain>E2348/69 / EPEC</strain>
    </source>
</reference>
<proteinExistence type="inferred from homology"/>
<sequence>MDWLAKYWWILVIVFLVGVLLNVIKDLKRVDHKKFLANKPELPPHRDFNDKWDDDDDWPKKDQPKK</sequence>
<name>YPFN_ECO27</name>
<keyword id="KW-1003">Cell membrane</keyword>
<keyword id="KW-0472">Membrane</keyword>
<keyword id="KW-1185">Reference proteome</keyword>
<keyword id="KW-0812">Transmembrane</keyword>
<keyword id="KW-1133">Transmembrane helix</keyword>
<evidence type="ECO:0000255" key="1">
    <source>
        <dbReference type="HAMAP-Rule" id="MF_01566"/>
    </source>
</evidence>
<evidence type="ECO:0000256" key="2">
    <source>
        <dbReference type="SAM" id="MobiDB-lite"/>
    </source>
</evidence>
<gene>
    <name evidence="1" type="primary">ypfN</name>
    <name type="ordered locus">E2348C_2709</name>
</gene>
<accession>B7UGM2</accession>